<keyword id="KW-0963">Cytoplasm</keyword>
<keyword id="KW-0489">Methyltransferase</keyword>
<keyword id="KW-1185">Reference proteome</keyword>
<keyword id="KW-0698">rRNA processing</keyword>
<keyword id="KW-0949">S-adenosyl-L-methionine</keyword>
<keyword id="KW-0808">Transferase</keyword>
<evidence type="ECO:0000255" key="1">
    <source>
        <dbReference type="HAMAP-Rule" id="MF_01007"/>
    </source>
</evidence>
<evidence type="ECO:0000256" key="2">
    <source>
        <dbReference type="SAM" id="MobiDB-lite"/>
    </source>
</evidence>
<reference key="1">
    <citation type="journal article" date="2008" name="J. Biotechnol.">
        <title>Ultrafast pyrosequencing of Corynebacterium kroppenstedtii DSM44385 revealed insights into the physiology of a lipophilic corynebacterium that lacks mycolic acids.</title>
        <authorList>
            <person name="Tauch A."/>
            <person name="Schneider J."/>
            <person name="Szczepanowski R."/>
            <person name="Tilker A."/>
            <person name="Viehoever P."/>
            <person name="Gartemann K.-H."/>
            <person name="Arnold W."/>
            <person name="Blom J."/>
            <person name="Brinkrolf K."/>
            <person name="Brune I."/>
            <person name="Goetker S."/>
            <person name="Weisshaar B."/>
            <person name="Goesmann A."/>
            <person name="Droege M."/>
            <person name="Puehler A."/>
        </authorList>
    </citation>
    <scope>NUCLEOTIDE SEQUENCE [LARGE SCALE GENOMIC DNA]</scope>
    <source>
        <strain>DSM 44385 / JCM 11950 / CIP 105744 / CCUG 35717</strain>
    </source>
</reference>
<sequence>MADRHTGTHGHVPVMLERMVELIAPTVTESSENSAPSVILDGTLGAGGHTESFLERFPSAMVIGVDRDKKELSRTTERLSRFQDRFYPVHARFDNFDEALDDADHPVVDAFDAHGLSAGFFDLGVSSMQLDQVDRGFTYRDDGPLDMRMDTSTGKTAADVLNTYSHGELARILKTYGDERFAGPLARAIVREREKEPWSTSQRLVDLIYATIPASARRHGGHPAKRTFQALRVEVNAELDALRRVIPKVCSYLHLGGRAVFMSYQSLEDKIVKRELAALTESKTPPGLPIDLPNSAPDFHLVTRGSEKADEQENNKNPRAHSVRVRAVERTGYSHSSPPPGSTPARASGSSTTYSARSGSRHEAHREGREHLVSSAQQSISHREDVEGEQ</sequence>
<feature type="chain" id="PRO_0000386829" description="Ribosomal RNA small subunit methyltransferase H">
    <location>
        <begin position="1"/>
        <end position="390"/>
    </location>
</feature>
<feature type="region of interest" description="Disordered" evidence="2">
    <location>
        <begin position="282"/>
        <end position="390"/>
    </location>
</feature>
<feature type="compositionally biased region" description="Basic and acidic residues" evidence="2">
    <location>
        <begin position="305"/>
        <end position="316"/>
    </location>
</feature>
<feature type="compositionally biased region" description="Polar residues" evidence="2">
    <location>
        <begin position="348"/>
        <end position="358"/>
    </location>
</feature>
<feature type="compositionally biased region" description="Basic and acidic residues" evidence="2">
    <location>
        <begin position="360"/>
        <end position="372"/>
    </location>
</feature>
<feature type="compositionally biased region" description="Basic and acidic residues" evidence="2">
    <location>
        <begin position="381"/>
        <end position="390"/>
    </location>
</feature>
<feature type="binding site" evidence="1">
    <location>
        <begin position="47"/>
        <end position="49"/>
    </location>
    <ligand>
        <name>S-adenosyl-L-methionine</name>
        <dbReference type="ChEBI" id="CHEBI:59789"/>
    </ligand>
</feature>
<feature type="binding site" evidence="1">
    <location>
        <position position="66"/>
    </location>
    <ligand>
        <name>S-adenosyl-L-methionine</name>
        <dbReference type="ChEBI" id="CHEBI:59789"/>
    </ligand>
</feature>
<feature type="binding site" evidence="1">
    <location>
        <position position="93"/>
    </location>
    <ligand>
        <name>S-adenosyl-L-methionine</name>
        <dbReference type="ChEBI" id="CHEBI:59789"/>
    </ligand>
</feature>
<feature type="binding site" evidence="1">
    <location>
        <position position="122"/>
    </location>
    <ligand>
        <name>S-adenosyl-L-methionine</name>
        <dbReference type="ChEBI" id="CHEBI:59789"/>
    </ligand>
</feature>
<feature type="binding site" evidence="1">
    <location>
        <position position="129"/>
    </location>
    <ligand>
        <name>S-adenosyl-L-methionine</name>
        <dbReference type="ChEBI" id="CHEBI:59789"/>
    </ligand>
</feature>
<proteinExistence type="inferred from homology"/>
<dbReference type="EC" id="2.1.1.199" evidence="1"/>
<dbReference type="EMBL" id="CP001620">
    <property type="protein sequence ID" value="ACR17497.1"/>
    <property type="molecule type" value="Genomic_DNA"/>
</dbReference>
<dbReference type="RefSeq" id="WP_012731384.1">
    <property type="nucleotide sequence ID" value="NC_012704.1"/>
</dbReference>
<dbReference type="SMR" id="C4LI42"/>
<dbReference type="STRING" id="645127.ckrop_0739"/>
<dbReference type="KEGG" id="ckp:ckrop_0739"/>
<dbReference type="eggNOG" id="COG0275">
    <property type="taxonomic scope" value="Bacteria"/>
</dbReference>
<dbReference type="HOGENOM" id="CLU_038422_0_0_11"/>
<dbReference type="OrthoDB" id="9806637at2"/>
<dbReference type="Proteomes" id="UP000001473">
    <property type="component" value="Chromosome"/>
</dbReference>
<dbReference type="GO" id="GO:0005737">
    <property type="term" value="C:cytoplasm"/>
    <property type="evidence" value="ECO:0007669"/>
    <property type="project" value="UniProtKB-SubCell"/>
</dbReference>
<dbReference type="GO" id="GO:0071424">
    <property type="term" value="F:rRNA (cytosine-N4-)-methyltransferase activity"/>
    <property type="evidence" value="ECO:0007669"/>
    <property type="project" value="UniProtKB-UniRule"/>
</dbReference>
<dbReference type="GO" id="GO:0070475">
    <property type="term" value="P:rRNA base methylation"/>
    <property type="evidence" value="ECO:0007669"/>
    <property type="project" value="UniProtKB-UniRule"/>
</dbReference>
<dbReference type="Gene3D" id="1.10.150.170">
    <property type="entry name" value="Putative methyltransferase TM0872, insert domain"/>
    <property type="match status" value="1"/>
</dbReference>
<dbReference type="Gene3D" id="3.40.50.150">
    <property type="entry name" value="Vaccinia Virus protein VP39"/>
    <property type="match status" value="1"/>
</dbReference>
<dbReference type="HAMAP" id="MF_01007">
    <property type="entry name" value="16SrRNA_methyltr_H"/>
    <property type="match status" value="1"/>
</dbReference>
<dbReference type="InterPro" id="IPR002903">
    <property type="entry name" value="RsmH"/>
</dbReference>
<dbReference type="InterPro" id="IPR023397">
    <property type="entry name" value="SAM-dep_MeTrfase_MraW_recog"/>
</dbReference>
<dbReference type="InterPro" id="IPR029063">
    <property type="entry name" value="SAM-dependent_MTases_sf"/>
</dbReference>
<dbReference type="NCBIfam" id="TIGR00006">
    <property type="entry name" value="16S rRNA (cytosine(1402)-N(4))-methyltransferase RsmH"/>
    <property type="match status" value="1"/>
</dbReference>
<dbReference type="PANTHER" id="PTHR11265:SF0">
    <property type="entry name" value="12S RRNA N4-METHYLCYTIDINE METHYLTRANSFERASE"/>
    <property type="match status" value="1"/>
</dbReference>
<dbReference type="PANTHER" id="PTHR11265">
    <property type="entry name" value="S-ADENOSYL-METHYLTRANSFERASE MRAW"/>
    <property type="match status" value="1"/>
</dbReference>
<dbReference type="Pfam" id="PF01795">
    <property type="entry name" value="Methyltransf_5"/>
    <property type="match status" value="1"/>
</dbReference>
<dbReference type="SUPFAM" id="SSF81799">
    <property type="entry name" value="Putative methyltransferase TM0872, insert domain"/>
    <property type="match status" value="1"/>
</dbReference>
<dbReference type="SUPFAM" id="SSF53335">
    <property type="entry name" value="S-adenosyl-L-methionine-dependent methyltransferases"/>
    <property type="match status" value="1"/>
</dbReference>
<organism>
    <name type="scientific">Corynebacterium kroppenstedtii (strain DSM 44385 / JCM 11950 / CIP 105744 / CCUG 35717)</name>
    <dbReference type="NCBI Taxonomy" id="645127"/>
    <lineage>
        <taxon>Bacteria</taxon>
        <taxon>Bacillati</taxon>
        <taxon>Actinomycetota</taxon>
        <taxon>Actinomycetes</taxon>
        <taxon>Mycobacteriales</taxon>
        <taxon>Corynebacteriaceae</taxon>
        <taxon>Corynebacterium</taxon>
    </lineage>
</organism>
<protein>
    <recommendedName>
        <fullName evidence="1">Ribosomal RNA small subunit methyltransferase H</fullName>
        <ecNumber evidence="1">2.1.1.199</ecNumber>
    </recommendedName>
    <alternativeName>
        <fullName evidence="1">16S rRNA m(4)C1402 methyltransferase</fullName>
    </alternativeName>
    <alternativeName>
        <fullName evidence="1">rRNA (cytosine-N(4)-)-methyltransferase RsmH</fullName>
    </alternativeName>
</protein>
<name>RSMH_CORK4</name>
<accession>C4LI42</accession>
<comment type="function">
    <text evidence="1">Specifically methylates the N4 position of cytidine in position 1402 (C1402) of 16S rRNA.</text>
</comment>
<comment type="catalytic activity">
    <reaction evidence="1">
        <text>cytidine(1402) in 16S rRNA + S-adenosyl-L-methionine = N(4)-methylcytidine(1402) in 16S rRNA + S-adenosyl-L-homocysteine + H(+)</text>
        <dbReference type="Rhea" id="RHEA:42928"/>
        <dbReference type="Rhea" id="RHEA-COMP:10286"/>
        <dbReference type="Rhea" id="RHEA-COMP:10287"/>
        <dbReference type="ChEBI" id="CHEBI:15378"/>
        <dbReference type="ChEBI" id="CHEBI:57856"/>
        <dbReference type="ChEBI" id="CHEBI:59789"/>
        <dbReference type="ChEBI" id="CHEBI:74506"/>
        <dbReference type="ChEBI" id="CHEBI:82748"/>
        <dbReference type="EC" id="2.1.1.199"/>
    </reaction>
</comment>
<comment type="subcellular location">
    <subcellularLocation>
        <location evidence="1">Cytoplasm</location>
    </subcellularLocation>
</comment>
<comment type="similarity">
    <text evidence="1">Belongs to the methyltransferase superfamily. RsmH family.</text>
</comment>
<gene>
    <name evidence="1" type="primary">rsmH</name>
    <name type="synonym">mraW</name>
    <name type="ordered locus">ckrop_0739</name>
</gene>